<accession>Q3YVN6</accession>
<comment type="function">
    <text evidence="1">Produces ATP from ADP in the presence of a proton gradient across the membrane. The catalytic sites are hosted primarily by the beta subunits.</text>
</comment>
<comment type="catalytic activity">
    <reaction evidence="1">
        <text>ATP + H2O + 4 H(+)(in) = ADP + phosphate + 5 H(+)(out)</text>
        <dbReference type="Rhea" id="RHEA:57720"/>
        <dbReference type="ChEBI" id="CHEBI:15377"/>
        <dbReference type="ChEBI" id="CHEBI:15378"/>
        <dbReference type="ChEBI" id="CHEBI:30616"/>
        <dbReference type="ChEBI" id="CHEBI:43474"/>
        <dbReference type="ChEBI" id="CHEBI:456216"/>
        <dbReference type="EC" id="7.1.2.2"/>
    </reaction>
</comment>
<comment type="subunit">
    <text evidence="1">F-type ATPases have 2 components, CF(1) - the catalytic core - and CF(0) - the membrane proton channel. CF(1) has five subunits: alpha(3), beta(3), gamma(1), delta(1), epsilon(1). CF(0) has three main subunits: a(1), b(2) and c(9-12). The alpha and beta chains form an alternating ring which encloses part of the gamma chain. CF(1) is attached to CF(0) by a central stalk formed by the gamma and epsilon chains, while a peripheral stalk is formed by the delta and b chains.</text>
</comment>
<comment type="subcellular location">
    <subcellularLocation>
        <location evidence="1">Cell inner membrane</location>
        <topology evidence="1">Peripheral membrane protein</topology>
    </subcellularLocation>
</comment>
<comment type="similarity">
    <text evidence="1">Belongs to the ATPase alpha/beta chains family.</text>
</comment>
<feature type="chain" id="PRO_0000254376" description="ATP synthase subunit beta">
    <location>
        <begin position="1"/>
        <end position="460"/>
    </location>
</feature>
<feature type="binding site" evidence="1">
    <location>
        <begin position="150"/>
        <end position="157"/>
    </location>
    <ligand>
        <name>ATP</name>
        <dbReference type="ChEBI" id="CHEBI:30616"/>
    </ligand>
</feature>
<reference key="1">
    <citation type="journal article" date="2005" name="Nucleic Acids Res.">
        <title>Genome dynamics and diversity of Shigella species, the etiologic agents of bacillary dysentery.</title>
        <authorList>
            <person name="Yang F."/>
            <person name="Yang J."/>
            <person name="Zhang X."/>
            <person name="Chen L."/>
            <person name="Jiang Y."/>
            <person name="Yan Y."/>
            <person name="Tang X."/>
            <person name="Wang J."/>
            <person name="Xiong Z."/>
            <person name="Dong J."/>
            <person name="Xue Y."/>
            <person name="Zhu Y."/>
            <person name="Xu X."/>
            <person name="Sun L."/>
            <person name="Chen S."/>
            <person name="Nie H."/>
            <person name="Peng J."/>
            <person name="Xu J."/>
            <person name="Wang Y."/>
            <person name="Yuan Z."/>
            <person name="Wen Y."/>
            <person name="Yao Z."/>
            <person name="Shen Y."/>
            <person name="Qiang B."/>
            <person name="Hou Y."/>
            <person name="Yu J."/>
            <person name="Jin Q."/>
        </authorList>
    </citation>
    <scope>NUCLEOTIDE SEQUENCE [LARGE SCALE GENOMIC DNA]</scope>
    <source>
        <strain>Ss046</strain>
    </source>
</reference>
<proteinExistence type="inferred from homology"/>
<keyword id="KW-0066">ATP synthesis</keyword>
<keyword id="KW-0067">ATP-binding</keyword>
<keyword id="KW-0997">Cell inner membrane</keyword>
<keyword id="KW-1003">Cell membrane</keyword>
<keyword id="KW-0139">CF(1)</keyword>
<keyword id="KW-0375">Hydrogen ion transport</keyword>
<keyword id="KW-0406">Ion transport</keyword>
<keyword id="KW-0472">Membrane</keyword>
<keyword id="KW-0547">Nucleotide-binding</keyword>
<keyword id="KW-1185">Reference proteome</keyword>
<keyword id="KW-1278">Translocase</keyword>
<keyword id="KW-0813">Transport</keyword>
<protein>
    <recommendedName>
        <fullName evidence="1">ATP synthase subunit beta</fullName>
        <ecNumber evidence="1">7.1.2.2</ecNumber>
    </recommendedName>
    <alternativeName>
        <fullName evidence="1">ATP synthase F1 sector subunit beta</fullName>
    </alternativeName>
    <alternativeName>
        <fullName evidence="1">F-ATPase subunit beta</fullName>
    </alternativeName>
</protein>
<name>ATPB_SHISS</name>
<dbReference type="EC" id="7.1.2.2" evidence="1"/>
<dbReference type="EMBL" id="CP000038">
    <property type="protein sequence ID" value="AAZ90426.1"/>
    <property type="molecule type" value="Genomic_DNA"/>
</dbReference>
<dbReference type="RefSeq" id="WP_000190506.1">
    <property type="nucleotide sequence ID" value="NC_007384.1"/>
</dbReference>
<dbReference type="SMR" id="Q3YVN6"/>
<dbReference type="GeneID" id="93778235"/>
<dbReference type="KEGG" id="ssn:SSON_3887"/>
<dbReference type="HOGENOM" id="CLU_022398_0_2_6"/>
<dbReference type="Proteomes" id="UP000002529">
    <property type="component" value="Chromosome"/>
</dbReference>
<dbReference type="GO" id="GO:0005886">
    <property type="term" value="C:plasma membrane"/>
    <property type="evidence" value="ECO:0007669"/>
    <property type="project" value="UniProtKB-SubCell"/>
</dbReference>
<dbReference type="GO" id="GO:0045259">
    <property type="term" value="C:proton-transporting ATP synthase complex"/>
    <property type="evidence" value="ECO:0007669"/>
    <property type="project" value="UniProtKB-KW"/>
</dbReference>
<dbReference type="GO" id="GO:0005524">
    <property type="term" value="F:ATP binding"/>
    <property type="evidence" value="ECO:0007669"/>
    <property type="project" value="UniProtKB-UniRule"/>
</dbReference>
<dbReference type="GO" id="GO:0016887">
    <property type="term" value="F:ATP hydrolysis activity"/>
    <property type="evidence" value="ECO:0007669"/>
    <property type="project" value="InterPro"/>
</dbReference>
<dbReference type="GO" id="GO:0046933">
    <property type="term" value="F:proton-transporting ATP synthase activity, rotational mechanism"/>
    <property type="evidence" value="ECO:0007669"/>
    <property type="project" value="UniProtKB-UniRule"/>
</dbReference>
<dbReference type="CDD" id="cd18110">
    <property type="entry name" value="ATP-synt_F1_beta_C"/>
    <property type="match status" value="1"/>
</dbReference>
<dbReference type="CDD" id="cd18115">
    <property type="entry name" value="ATP-synt_F1_beta_N"/>
    <property type="match status" value="1"/>
</dbReference>
<dbReference type="CDD" id="cd01133">
    <property type="entry name" value="F1-ATPase_beta_CD"/>
    <property type="match status" value="1"/>
</dbReference>
<dbReference type="FunFam" id="1.10.1140.10:FF:000001">
    <property type="entry name" value="ATP synthase subunit beta"/>
    <property type="match status" value="1"/>
</dbReference>
<dbReference type="FunFam" id="2.40.10.170:FF:000003">
    <property type="entry name" value="ATP synthase subunit beta"/>
    <property type="match status" value="1"/>
</dbReference>
<dbReference type="FunFam" id="3.40.50.300:FF:000004">
    <property type="entry name" value="ATP synthase subunit beta"/>
    <property type="match status" value="1"/>
</dbReference>
<dbReference type="Gene3D" id="2.40.10.170">
    <property type="match status" value="1"/>
</dbReference>
<dbReference type="Gene3D" id="1.10.1140.10">
    <property type="entry name" value="Bovine Mitochondrial F1-atpase, Atp Synthase Beta Chain, Chain D, domain 3"/>
    <property type="match status" value="1"/>
</dbReference>
<dbReference type="Gene3D" id="3.40.50.300">
    <property type="entry name" value="P-loop containing nucleotide triphosphate hydrolases"/>
    <property type="match status" value="1"/>
</dbReference>
<dbReference type="HAMAP" id="MF_01347">
    <property type="entry name" value="ATP_synth_beta_bact"/>
    <property type="match status" value="1"/>
</dbReference>
<dbReference type="InterPro" id="IPR003593">
    <property type="entry name" value="AAA+_ATPase"/>
</dbReference>
<dbReference type="InterPro" id="IPR055190">
    <property type="entry name" value="ATP-synt_VA_C"/>
</dbReference>
<dbReference type="InterPro" id="IPR005722">
    <property type="entry name" value="ATP_synth_F1_bsu"/>
</dbReference>
<dbReference type="InterPro" id="IPR020003">
    <property type="entry name" value="ATPase_a/bsu_AS"/>
</dbReference>
<dbReference type="InterPro" id="IPR050053">
    <property type="entry name" value="ATPase_alpha/beta_chains"/>
</dbReference>
<dbReference type="InterPro" id="IPR004100">
    <property type="entry name" value="ATPase_F1/V1/A1_a/bsu_N"/>
</dbReference>
<dbReference type="InterPro" id="IPR036121">
    <property type="entry name" value="ATPase_F1/V1/A1_a/bsu_N_sf"/>
</dbReference>
<dbReference type="InterPro" id="IPR000194">
    <property type="entry name" value="ATPase_F1/V1/A1_a/bsu_nucl-bd"/>
</dbReference>
<dbReference type="InterPro" id="IPR024034">
    <property type="entry name" value="ATPase_F1/V1_b/a_C"/>
</dbReference>
<dbReference type="InterPro" id="IPR027417">
    <property type="entry name" value="P-loop_NTPase"/>
</dbReference>
<dbReference type="NCBIfam" id="TIGR01039">
    <property type="entry name" value="atpD"/>
    <property type="match status" value="1"/>
</dbReference>
<dbReference type="PANTHER" id="PTHR15184">
    <property type="entry name" value="ATP SYNTHASE"/>
    <property type="match status" value="1"/>
</dbReference>
<dbReference type="PANTHER" id="PTHR15184:SF71">
    <property type="entry name" value="ATP SYNTHASE SUBUNIT BETA, MITOCHONDRIAL"/>
    <property type="match status" value="1"/>
</dbReference>
<dbReference type="Pfam" id="PF00006">
    <property type="entry name" value="ATP-synt_ab"/>
    <property type="match status" value="1"/>
</dbReference>
<dbReference type="Pfam" id="PF02874">
    <property type="entry name" value="ATP-synt_ab_N"/>
    <property type="match status" value="1"/>
</dbReference>
<dbReference type="Pfam" id="PF22919">
    <property type="entry name" value="ATP-synt_VA_C"/>
    <property type="match status" value="1"/>
</dbReference>
<dbReference type="SMART" id="SM00382">
    <property type="entry name" value="AAA"/>
    <property type="match status" value="1"/>
</dbReference>
<dbReference type="SUPFAM" id="SSF47917">
    <property type="entry name" value="C-terminal domain of alpha and beta subunits of F1 ATP synthase"/>
    <property type="match status" value="1"/>
</dbReference>
<dbReference type="SUPFAM" id="SSF50615">
    <property type="entry name" value="N-terminal domain of alpha and beta subunits of F1 ATP synthase"/>
    <property type="match status" value="1"/>
</dbReference>
<dbReference type="SUPFAM" id="SSF52540">
    <property type="entry name" value="P-loop containing nucleoside triphosphate hydrolases"/>
    <property type="match status" value="1"/>
</dbReference>
<dbReference type="PROSITE" id="PS00152">
    <property type="entry name" value="ATPASE_ALPHA_BETA"/>
    <property type="match status" value="1"/>
</dbReference>
<organism>
    <name type="scientific">Shigella sonnei (strain Ss046)</name>
    <dbReference type="NCBI Taxonomy" id="300269"/>
    <lineage>
        <taxon>Bacteria</taxon>
        <taxon>Pseudomonadati</taxon>
        <taxon>Pseudomonadota</taxon>
        <taxon>Gammaproteobacteria</taxon>
        <taxon>Enterobacterales</taxon>
        <taxon>Enterobacteriaceae</taxon>
        <taxon>Shigella</taxon>
    </lineage>
</organism>
<sequence>MATGKIVQVIGAVVDVEFPQDAVPRVYDALEVQNGNERLVLEVQQQLGGGIVRTIAMGSSDGLRRGLDVKDLEHPIEVPVGKATLGRIMNVLGEPVDMKGEIGEEERWAIHRAAPSYEELSNSQELLETGIKVIDLMCPFAKGGKVGLFGGAGVGKTVNMMELIRNIAIEHSGYSVFAGVGERTREGNDFYHEMTDSNVIDKVSLVYGQMNEPPGNRLRVALTGLTMAEKFRDEGRDVLLFVDNIYRYTLAGTEVSALLGRMPSAVGYQPTLAEEMGVLQERITSTKTGSITSVQAVYVPADDLTDPSPATTFAHLDATVVLSRQIASLGIYPAVDPLDSTSRQLDPLVVGQEHYDTARGVQSILQRYQELKDIIAILGMDELSEEDKLVVARARKIQRFLSQPFFVAEVFTGSPGKYVSLKDTIRGFKGIMEGEYDHLPEQAFYMVGSIEEAVEKAKKL</sequence>
<gene>
    <name evidence="1" type="primary">atpD</name>
    <name type="ordered locus">SSON_3887</name>
</gene>
<evidence type="ECO:0000255" key="1">
    <source>
        <dbReference type="HAMAP-Rule" id="MF_01347"/>
    </source>
</evidence>